<gene>
    <name type="primary">YUR1</name>
    <name type="ordered locus">YJL139C</name>
    <name type="ORF">J0657</name>
</gene>
<protein>
    <recommendedName>
        <fullName>Probable mannosyltransferase YUR1</fullName>
        <ecNumber>2.4.1.-</ecNumber>
    </recommendedName>
</protein>
<evidence type="ECO:0000250" key="1"/>
<evidence type="ECO:0000255" key="2"/>
<evidence type="ECO:0000269" key="3">
    <source>
    </source>
</evidence>
<evidence type="ECO:0000305" key="4"/>
<proteinExistence type="evidence at protein level"/>
<accession>P26725</accession>
<accession>D6VW45</accession>
<dbReference type="EC" id="2.4.1.-"/>
<dbReference type="EMBL" id="X58099">
    <property type="protein sequence ID" value="CAA41111.1"/>
    <property type="molecule type" value="Genomic_DNA"/>
</dbReference>
<dbReference type="EMBL" id="X87371">
    <property type="protein sequence ID" value="CAA60816.1"/>
    <property type="molecule type" value="Genomic_DNA"/>
</dbReference>
<dbReference type="EMBL" id="Z49414">
    <property type="protein sequence ID" value="CAA89434.1"/>
    <property type="molecule type" value="Genomic_DNA"/>
</dbReference>
<dbReference type="EMBL" id="BK006943">
    <property type="protein sequence ID" value="DAA08661.1"/>
    <property type="molecule type" value="Genomic_DNA"/>
</dbReference>
<dbReference type="PIR" id="S36856">
    <property type="entry name" value="S36856"/>
</dbReference>
<dbReference type="RefSeq" id="NP_012396.1">
    <property type="nucleotide sequence ID" value="NM_001181572.1"/>
</dbReference>
<dbReference type="SMR" id="P26725"/>
<dbReference type="BioGRID" id="33618">
    <property type="interactions" value="158"/>
</dbReference>
<dbReference type="DIP" id="DIP-2605N"/>
<dbReference type="FunCoup" id="P26725">
    <property type="interactions" value="37"/>
</dbReference>
<dbReference type="IntAct" id="P26725">
    <property type="interactions" value="3"/>
</dbReference>
<dbReference type="MINT" id="P26725"/>
<dbReference type="STRING" id="4932.YJL139C"/>
<dbReference type="CAZy" id="GT15">
    <property type="family name" value="Glycosyltransferase Family 15"/>
</dbReference>
<dbReference type="GlyCosmos" id="P26725">
    <property type="glycosylation" value="5 sites, No reported glycans"/>
</dbReference>
<dbReference type="GlyGen" id="P26725">
    <property type="glycosylation" value="5 sites"/>
</dbReference>
<dbReference type="PaxDb" id="4932-YJL139C"/>
<dbReference type="PeptideAtlas" id="P26725"/>
<dbReference type="EnsemblFungi" id="YJL139C_mRNA">
    <property type="protein sequence ID" value="YJL139C"/>
    <property type="gene ID" value="YJL139C"/>
</dbReference>
<dbReference type="GeneID" id="853302"/>
<dbReference type="KEGG" id="sce:YJL139C"/>
<dbReference type="AGR" id="SGD:S000003675"/>
<dbReference type="SGD" id="S000003675">
    <property type="gene designation" value="YUR1"/>
</dbReference>
<dbReference type="VEuPathDB" id="FungiDB:YJL139C"/>
<dbReference type="eggNOG" id="KOG4472">
    <property type="taxonomic scope" value="Eukaryota"/>
</dbReference>
<dbReference type="GeneTree" id="ENSGT00940000176287"/>
<dbReference type="HOGENOM" id="CLU_024327_4_2_1"/>
<dbReference type="InParanoid" id="P26725"/>
<dbReference type="OMA" id="DWYFRVE"/>
<dbReference type="OrthoDB" id="439943at2759"/>
<dbReference type="BioCyc" id="YEAST:YJL139C-MONOMER"/>
<dbReference type="UniPathway" id="UPA00378"/>
<dbReference type="BioGRID-ORCS" id="853302">
    <property type="hits" value="0 hits in 10 CRISPR screens"/>
</dbReference>
<dbReference type="PRO" id="PR:P26725"/>
<dbReference type="Proteomes" id="UP000002311">
    <property type="component" value="Chromosome X"/>
</dbReference>
<dbReference type="RNAct" id="P26725">
    <property type="molecule type" value="protein"/>
</dbReference>
<dbReference type="GO" id="GO:0005783">
    <property type="term" value="C:endoplasmic reticulum"/>
    <property type="evidence" value="ECO:0007005"/>
    <property type="project" value="SGD"/>
</dbReference>
<dbReference type="GO" id="GO:0005794">
    <property type="term" value="C:Golgi apparatus"/>
    <property type="evidence" value="ECO:0000314"/>
    <property type="project" value="SGD"/>
</dbReference>
<dbReference type="GO" id="GO:0000139">
    <property type="term" value="C:Golgi membrane"/>
    <property type="evidence" value="ECO:0007669"/>
    <property type="project" value="UniProtKB-SubCell"/>
</dbReference>
<dbReference type="GO" id="GO:0000026">
    <property type="term" value="F:alpha-1,2-mannosyltransferase activity"/>
    <property type="evidence" value="ECO:0000318"/>
    <property type="project" value="GO_Central"/>
</dbReference>
<dbReference type="GO" id="GO:0000030">
    <property type="term" value="F:mannosyltransferase activity"/>
    <property type="evidence" value="ECO:0000314"/>
    <property type="project" value="SGD"/>
</dbReference>
<dbReference type="GO" id="GO:0000032">
    <property type="term" value="P:cell wall mannoprotein biosynthetic process"/>
    <property type="evidence" value="ECO:0000315"/>
    <property type="project" value="SGD"/>
</dbReference>
<dbReference type="GO" id="GO:0006487">
    <property type="term" value="P:protein N-linked glycosylation"/>
    <property type="evidence" value="ECO:0000315"/>
    <property type="project" value="SGD"/>
</dbReference>
<dbReference type="GO" id="GO:0006493">
    <property type="term" value="P:protein O-linked glycosylation"/>
    <property type="evidence" value="ECO:0000318"/>
    <property type="project" value="GO_Central"/>
</dbReference>
<dbReference type="FunFam" id="3.90.550.10:FF:000051">
    <property type="entry name" value="Alpha-1,2-mannosyltransferase (Ktr4)"/>
    <property type="match status" value="1"/>
</dbReference>
<dbReference type="Gene3D" id="3.90.550.10">
    <property type="entry name" value="Spore Coat Polysaccharide Biosynthesis Protein SpsA, Chain A"/>
    <property type="match status" value="1"/>
</dbReference>
<dbReference type="InterPro" id="IPR002685">
    <property type="entry name" value="Glyco_trans_15"/>
</dbReference>
<dbReference type="InterPro" id="IPR029044">
    <property type="entry name" value="Nucleotide-diphossugar_trans"/>
</dbReference>
<dbReference type="PANTHER" id="PTHR31121">
    <property type="entry name" value="ALPHA-1,2 MANNOSYLTRANSFERASE KTR1"/>
    <property type="match status" value="1"/>
</dbReference>
<dbReference type="PANTHER" id="PTHR31121:SF10">
    <property type="entry name" value="MANNOSYLTRANSFERASE KTR2-RELATED"/>
    <property type="match status" value="1"/>
</dbReference>
<dbReference type="Pfam" id="PF01793">
    <property type="entry name" value="Glyco_transf_15"/>
    <property type="match status" value="1"/>
</dbReference>
<dbReference type="PIRSF" id="PIRSF018153">
    <property type="entry name" value="Glyco_trans_15"/>
    <property type="match status" value="1"/>
</dbReference>
<dbReference type="SUPFAM" id="SSF53448">
    <property type="entry name" value="Nucleotide-diphospho-sugar transferases"/>
    <property type="match status" value="1"/>
</dbReference>
<sequence length="428" mass="50836">MAKGGSLYIVGIFLPIWTFMIYIFGKELFLIRKYQKIDSTYTALSQRVKEQYDTSRRRNYFPKVKLSRNSYDDYTLNYTRQNDSDSFHLRENATILMLVRNSELEGALDSMRSLEDRFNNKYHYDWTFLNDVPFDQDFIEATTSMASGKTQYALIPPEDWNRPQWINDTLFEERLRVMEDEGVLYGGSKSYRNMCRFNSGFFFRQSILDNYDYYFRVEPNVKYYCDFPYDPFRVMRLKGKKYGFVISLYEYEETIPTLWDAVEEYLVASEETILRKEDSAYAFLTDSGLVGKHYPVVEANSDYNLCHFWSNFEIGDLNFFRSDEYKHFFETLDAKGGFYYERWGDAPVHSIGVSLLLRPDEIIHFDELGYFHSPFGTCPASYAVRLDQRCRCKSDDESVIDITPHSCLMRWWKNGSGKYFLKEEQDEI</sequence>
<organism>
    <name type="scientific">Saccharomyces cerevisiae (strain ATCC 204508 / S288c)</name>
    <name type="common">Baker's yeast</name>
    <dbReference type="NCBI Taxonomy" id="559292"/>
    <lineage>
        <taxon>Eukaryota</taxon>
        <taxon>Fungi</taxon>
        <taxon>Dikarya</taxon>
        <taxon>Ascomycota</taxon>
        <taxon>Saccharomycotina</taxon>
        <taxon>Saccharomycetes</taxon>
        <taxon>Saccharomycetales</taxon>
        <taxon>Saccharomycetaceae</taxon>
        <taxon>Saccharomyces</taxon>
    </lineage>
</organism>
<keyword id="KW-0325">Glycoprotein</keyword>
<keyword id="KW-0328">Glycosyltransferase</keyword>
<keyword id="KW-0333">Golgi apparatus</keyword>
<keyword id="KW-0472">Membrane</keyword>
<keyword id="KW-1185">Reference proteome</keyword>
<keyword id="KW-0735">Signal-anchor</keyword>
<keyword id="KW-0808">Transferase</keyword>
<keyword id="KW-0812">Transmembrane</keyword>
<keyword id="KW-1133">Transmembrane helix</keyword>
<name>YUR1_YEAST</name>
<feature type="chain" id="PRO_0000208250" description="Probable mannosyltransferase YUR1">
    <location>
        <begin position="1"/>
        <end position="428"/>
    </location>
</feature>
<feature type="topological domain" description="Cytoplasmic" evidence="2">
    <location>
        <begin position="1"/>
        <end position="3"/>
    </location>
</feature>
<feature type="transmembrane region" description="Helical; Signal-anchor for type II membrane protein">
    <location>
        <begin position="4"/>
        <end position="24"/>
    </location>
</feature>
<feature type="topological domain" description="Lumenal" evidence="2">
    <location>
        <begin position="25"/>
        <end position="428"/>
    </location>
</feature>
<feature type="region of interest" description="Stem region" evidence="1">
    <location>
        <begin position="25"/>
        <end position="88"/>
    </location>
</feature>
<feature type="region of interest" description="Catalytic" evidence="1">
    <location>
        <begin position="89"/>
        <end position="428"/>
    </location>
</feature>
<feature type="active site" description="Nucleophile" evidence="2">
    <location>
        <position position="313"/>
    </location>
</feature>
<feature type="glycosylation site" description="N-linked (GlcNAc...) asparagine" evidence="2">
    <location>
        <position position="77"/>
    </location>
</feature>
<feature type="glycosylation site" description="N-linked (GlcNAc...) asparagine" evidence="2">
    <location>
        <position position="82"/>
    </location>
</feature>
<feature type="glycosylation site" description="N-linked (GlcNAc...) asparagine" evidence="2">
    <location>
        <position position="92"/>
    </location>
</feature>
<feature type="glycosylation site" description="N-linked (GlcNAc...) asparagine" evidence="2">
    <location>
        <position position="167"/>
    </location>
</feature>
<feature type="glycosylation site" description="N-linked (GlcNAc...) asparagine" evidence="2">
    <location>
        <position position="414"/>
    </location>
</feature>
<reference key="1">
    <citation type="journal article" date="1991" name="Nucleic Acids Res.">
        <title>The Saccharomyces cerevisiae RPB4 gene is tightly linked to the TIF2 gene.</title>
        <authorList>
            <person name="Foreman P.K."/>
            <person name="Davis R.W."/>
            <person name="Sachs A.B."/>
        </authorList>
    </citation>
    <scope>NUCLEOTIDE SEQUENCE [GENOMIC DNA]</scope>
</reference>
<reference key="2">
    <citation type="journal article" date="1996" name="Yeast">
        <title>Sequence analysis of a 40.7 kb segment from the left arm of yeast chromosome X reveals 14 known genes and 13 new open reading frames including homologues of genes clustered on the right arm of chromosome XI.</title>
        <authorList>
            <person name="Katsoulou C."/>
            <person name="Tzermia M."/>
            <person name="Tavernarakis N."/>
            <person name="Alexandraki D."/>
        </authorList>
    </citation>
    <scope>NUCLEOTIDE SEQUENCE [GENOMIC DNA]</scope>
    <source>
        <strain>ATCC 96604 / S288c / FY1679</strain>
    </source>
</reference>
<reference key="3">
    <citation type="journal article" date="1996" name="EMBO J.">
        <title>Complete nucleotide sequence of Saccharomyces cerevisiae chromosome X.</title>
        <authorList>
            <person name="Galibert F."/>
            <person name="Alexandraki D."/>
            <person name="Baur A."/>
            <person name="Boles E."/>
            <person name="Chalwatzis N."/>
            <person name="Chuat J.-C."/>
            <person name="Coster F."/>
            <person name="Cziepluch C."/>
            <person name="de Haan M."/>
            <person name="Domdey H."/>
            <person name="Durand P."/>
            <person name="Entian K.-D."/>
            <person name="Gatius M."/>
            <person name="Goffeau A."/>
            <person name="Grivell L.A."/>
            <person name="Hennemann A."/>
            <person name="Herbert C.J."/>
            <person name="Heumann K."/>
            <person name="Hilger F."/>
            <person name="Hollenberg C.P."/>
            <person name="Huang M.-E."/>
            <person name="Jacq C."/>
            <person name="Jauniaux J.-C."/>
            <person name="Katsoulou C."/>
            <person name="Kirchrath L."/>
            <person name="Kleine K."/>
            <person name="Kordes E."/>
            <person name="Koetter P."/>
            <person name="Liebl S."/>
            <person name="Louis E.J."/>
            <person name="Manus V."/>
            <person name="Mewes H.-W."/>
            <person name="Miosga T."/>
            <person name="Obermaier B."/>
            <person name="Perea J."/>
            <person name="Pohl T.M."/>
            <person name="Portetelle D."/>
            <person name="Pujol A."/>
            <person name="Purnelle B."/>
            <person name="Ramezani Rad M."/>
            <person name="Rasmussen S.W."/>
            <person name="Rose M."/>
            <person name="Rossau R."/>
            <person name="Schaaff-Gerstenschlaeger I."/>
            <person name="Smits P.H.M."/>
            <person name="Scarcez T."/>
            <person name="Soriano N."/>
            <person name="To Van D."/>
            <person name="Tzermia M."/>
            <person name="Van Broekhoven A."/>
            <person name="Vandenbol M."/>
            <person name="Wedler H."/>
            <person name="von Wettstein D."/>
            <person name="Wambutt R."/>
            <person name="Zagulski M."/>
            <person name="Zollner A."/>
            <person name="Karpfinger-Hartl L."/>
        </authorList>
    </citation>
    <scope>NUCLEOTIDE SEQUENCE [LARGE SCALE GENOMIC DNA]</scope>
    <source>
        <strain>ATCC 204508 / S288c</strain>
    </source>
</reference>
<reference key="4">
    <citation type="journal article" date="2014" name="G3 (Bethesda)">
        <title>The reference genome sequence of Saccharomyces cerevisiae: Then and now.</title>
        <authorList>
            <person name="Engel S.R."/>
            <person name="Dietrich F.S."/>
            <person name="Fisk D.G."/>
            <person name="Binkley G."/>
            <person name="Balakrishnan R."/>
            <person name="Costanzo M.C."/>
            <person name="Dwight S.S."/>
            <person name="Hitz B.C."/>
            <person name="Karra K."/>
            <person name="Nash R.S."/>
            <person name="Weng S."/>
            <person name="Wong E.D."/>
            <person name="Lloyd P."/>
            <person name="Skrzypek M.S."/>
            <person name="Miyasato S.R."/>
            <person name="Simison M."/>
            <person name="Cherry J.M."/>
        </authorList>
    </citation>
    <scope>GENOME REANNOTATION</scope>
    <source>
        <strain>ATCC 204508 / S288c</strain>
    </source>
</reference>
<reference key="5">
    <citation type="journal article" date="2003" name="Nature">
        <title>Global analysis of protein expression in yeast.</title>
        <authorList>
            <person name="Ghaemmaghami S."/>
            <person name="Huh W.-K."/>
            <person name="Bower K."/>
            <person name="Howson R.W."/>
            <person name="Belle A."/>
            <person name="Dephoure N."/>
            <person name="O'Shea E.K."/>
            <person name="Weissman J.S."/>
        </authorList>
    </citation>
    <scope>LEVEL OF PROTEIN EXPRESSION [LARGE SCALE ANALYSIS]</scope>
</reference>
<comment type="function">
    <text>Possible glycosyltransferase involved in N-linked glycosylation. Transfers an alpha-D-mannosyl residue from GDP-mannose into lipid-linked oligosaccharide, forming an alpha-(1-&gt;2)-D-mannosyl-D-mannose linkage.</text>
</comment>
<comment type="pathway">
    <text>Protein modification; protein glycosylation.</text>
</comment>
<comment type="subcellular location">
    <subcellularLocation>
        <location>Golgi apparatus membrane</location>
        <topology>Single-pass type II membrane protein</topology>
    </subcellularLocation>
</comment>
<comment type="miscellaneous">
    <text evidence="3">Present with 6400 molecules/cell in log phase SD medium.</text>
</comment>
<comment type="similarity">
    <text evidence="4">Belongs to the glycosyltransferase 15 family.</text>
</comment>